<feature type="chain" id="PRO_0000124355" description="Small ribosomal subunit protein uS7">
    <location>
        <begin position="1"/>
        <end position="156"/>
    </location>
</feature>
<sequence length="156" mass="17755">MSRKNRAPKRDVLPDPLYNSQLVTRLINRVMLDGKRGTAASIVYGAFEQIKEATGNDALEVFETAMENIMPVLEVRARRVGGSNYQVPVKVRPERRTTLGLRWLVTIARLRGEHTMQDRLAKEILDAANNTGAAVKKREDTHRMAEANRAFAHFRW</sequence>
<proteinExistence type="inferred from homology"/>
<reference key="1">
    <citation type="journal article" date="2001" name="Science">
        <title>Complete genome sequence of a virulent isolate of Streptococcus pneumoniae.</title>
        <authorList>
            <person name="Tettelin H."/>
            <person name="Nelson K.E."/>
            <person name="Paulsen I.T."/>
            <person name="Eisen J.A."/>
            <person name="Read T.D."/>
            <person name="Peterson S.N."/>
            <person name="Heidelberg J.F."/>
            <person name="DeBoy R.T."/>
            <person name="Haft D.H."/>
            <person name="Dodson R.J."/>
            <person name="Durkin A.S."/>
            <person name="Gwinn M.L."/>
            <person name="Kolonay J.F."/>
            <person name="Nelson W.C."/>
            <person name="Peterson J.D."/>
            <person name="Umayam L.A."/>
            <person name="White O."/>
            <person name="Salzberg S.L."/>
            <person name="Lewis M.R."/>
            <person name="Radune D."/>
            <person name="Holtzapple E.K."/>
            <person name="Khouri H.M."/>
            <person name="Wolf A.M."/>
            <person name="Utterback T.R."/>
            <person name="Hansen C.L."/>
            <person name="McDonald L.A."/>
            <person name="Feldblyum T.V."/>
            <person name="Angiuoli S.V."/>
            <person name="Dickinson T."/>
            <person name="Hickey E.K."/>
            <person name="Holt I.E."/>
            <person name="Loftus B.J."/>
            <person name="Yang F."/>
            <person name="Smith H.O."/>
            <person name="Venter J.C."/>
            <person name="Dougherty B.A."/>
            <person name="Morrison D.A."/>
            <person name="Hollingshead S.K."/>
            <person name="Fraser C.M."/>
        </authorList>
    </citation>
    <scope>NUCLEOTIDE SEQUENCE [LARGE SCALE GENOMIC DNA]</scope>
    <source>
        <strain>ATCC BAA-334 / TIGR4</strain>
    </source>
</reference>
<organism>
    <name type="scientific">Streptococcus pneumoniae serotype 4 (strain ATCC BAA-334 / TIGR4)</name>
    <dbReference type="NCBI Taxonomy" id="170187"/>
    <lineage>
        <taxon>Bacteria</taxon>
        <taxon>Bacillati</taxon>
        <taxon>Bacillota</taxon>
        <taxon>Bacilli</taxon>
        <taxon>Lactobacillales</taxon>
        <taxon>Streptococcaceae</taxon>
        <taxon>Streptococcus</taxon>
    </lineage>
</organism>
<evidence type="ECO:0000255" key="1">
    <source>
        <dbReference type="HAMAP-Rule" id="MF_00480"/>
    </source>
</evidence>
<evidence type="ECO:0000305" key="2"/>
<name>RS7_STRPN</name>
<protein>
    <recommendedName>
        <fullName evidence="1">Small ribosomal subunit protein uS7</fullName>
    </recommendedName>
    <alternativeName>
        <fullName evidence="2">30S ribosomal protein S7</fullName>
    </alternativeName>
</protein>
<gene>
    <name evidence="1" type="primary">rpsG</name>
    <name type="ordered locus">SP_0272</name>
</gene>
<dbReference type="EMBL" id="AE005672">
    <property type="protein sequence ID" value="AAK74450.1"/>
    <property type="molecule type" value="Genomic_DNA"/>
</dbReference>
<dbReference type="PIR" id="A95032">
    <property type="entry name" value="A95032"/>
</dbReference>
<dbReference type="RefSeq" id="WP_000087875.1">
    <property type="nucleotide sequence ID" value="NC_003028.3"/>
</dbReference>
<dbReference type="SMR" id="Q97SQ4"/>
<dbReference type="PaxDb" id="170187-SP_0272"/>
<dbReference type="EnsemblBacteria" id="AAK74450">
    <property type="protein sequence ID" value="AAK74450"/>
    <property type="gene ID" value="SP_0272"/>
</dbReference>
<dbReference type="KEGG" id="spn:SP_0272"/>
<dbReference type="eggNOG" id="COG0049">
    <property type="taxonomic scope" value="Bacteria"/>
</dbReference>
<dbReference type="PhylomeDB" id="Q97SQ4"/>
<dbReference type="BioCyc" id="SPNE170187:G1FZB-278-MONOMER"/>
<dbReference type="Proteomes" id="UP000000585">
    <property type="component" value="Chromosome"/>
</dbReference>
<dbReference type="GO" id="GO:0015935">
    <property type="term" value="C:small ribosomal subunit"/>
    <property type="evidence" value="ECO:0007669"/>
    <property type="project" value="InterPro"/>
</dbReference>
<dbReference type="GO" id="GO:0019843">
    <property type="term" value="F:rRNA binding"/>
    <property type="evidence" value="ECO:0007669"/>
    <property type="project" value="UniProtKB-UniRule"/>
</dbReference>
<dbReference type="GO" id="GO:0003735">
    <property type="term" value="F:structural constituent of ribosome"/>
    <property type="evidence" value="ECO:0007669"/>
    <property type="project" value="InterPro"/>
</dbReference>
<dbReference type="GO" id="GO:0000049">
    <property type="term" value="F:tRNA binding"/>
    <property type="evidence" value="ECO:0007669"/>
    <property type="project" value="UniProtKB-UniRule"/>
</dbReference>
<dbReference type="GO" id="GO:0006412">
    <property type="term" value="P:translation"/>
    <property type="evidence" value="ECO:0007669"/>
    <property type="project" value="UniProtKB-UniRule"/>
</dbReference>
<dbReference type="CDD" id="cd14869">
    <property type="entry name" value="uS7_Bacteria"/>
    <property type="match status" value="1"/>
</dbReference>
<dbReference type="FunFam" id="1.10.455.10:FF:000001">
    <property type="entry name" value="30S ribosomal protein S7"/>
    <property type="match status" value="1"/>
</dbReference>
<dbReference type="Gene3D" id="1.10.455.10">
    <property type="entry name" value="Ribosomal protein S7 domain"/>
    <property type="match status" value="1"/>
</dbReference>
<dbReference type="HAMAP" id="MF_00480_B">
    <property type="entry name" value="Ribosomal_uS7_B"/>
    <property type="match status" value="1"/>
</dbReference>
<dbReference type="InterPro" id="IPR000235">
    <property type="entry name" value="Ribosomal_uS7"/>
</dbReference>
<dbReference type="InterPro" id="IPR005717">
    <property type="entry name" value="Ribosomal_uS7_bac/org-type"/>
</dbReference>
<dbReference type="InterPro" id="IPR020606">
    <property type="entry name" value="Ribosomal_uS7_CS"/>
</dbReference>
<dbReference type="InterPro" id="IPR023798">
    <property type="entry name" value="Ribosomal_uS7_dom"/>
</dbReference>
<dbReference type="InterPro" id="IPR036823">
    <property type="entry name" value="Ribosomal_uS7_dom_sf"/>
</dbReference>
<dbReference type="NCBIfam" id="TIGR01029">
    <property type="entry name" value="rpsG_bact"/>
    <property type="match status" value="1"/>
</dbReference>
<dbReference type="PANTHER" id="PTHR11205">
    <property type="entry name" value="RIBOSOMAL PROTEIN S7"/>
    <property type="match status" value="1"/>
</dbReference>
<dbReference type="Pfam" id="PF00177">
    <property type="entry name" value="Ribosomal_S7"/>
    <property type="match status" value="1"/>
</dbReference>
<dbReference type="PIRSF" id="PIRSF002122">
    <property type="entry name" value="RPS7p_RPS7a_RPS5e_RPS7o"/>
    <property type="match status" value="1"/>
</dbReference>
<dbReference type="SUPFAM" id="SSF47973">
    <property type="entry name" value="Ribosomal protein S7"/>
    <property type="match status" value="1"/>
</dbReference>
<dbReference type="PROSITE" id="PS00052">
    <property type="entry name" value="RIBOSOMAL_S7"/>
    <property type="match status" value="1"/>
</dbReference>
<keyword id="KW-1185">Reference proteome</keyword>
<keyword id="KW-0687">Ribonucleoprotein</keyword>
<keyword id="KW-0689">Ribosomal protein</keyword>
<keyword id="KW-0694">RNA-binding</keyword>
<keyword id="KW-0699">rRNA-binding</keyword>
<keyword id="KW-0820">tRNA-binding</keyword>
<comment type="function">
    <text evidence="1">One of the primary rRNA binding proteins, it binds directly to 16S rRNA where it nucleates assembly of the head domain of the 30S subunit. Is located at the subunit interface close to the decoding center, probably blocks exit of the E-site tRNA.</text>
</comment>
<comment type="subunit">
    <text evidence="1">Part of the 30S ribosomal subunit. Contacts proteins S9 and S11.</text>
</comment>
<comment type="similarity">
    <text evidence="1">Belongs to the universal ribosomal protein uS7 family.</text>
</comment>
<accession>Q97SQ4</accession>